<feature type="chain" id="PRO_1000184910" description="DNA integrity scanning protein DisA">
    <location>
        <begin position="1"/>
        <end position="357"/>
    </location>
</feature>
<feature type="domain" description="DAC" evidence="2">
    <location>
        <begin position="8"/>
        <end position="146"/>
    </location>
</feature>
<feature type="binding site" evidence="1">
    <location>
        <position position="75"/>
    </location>
    <ligand>
        <name>ATP</name>
        <dbReference type="ChEBI" id="CHEBI:30616"/>
    </ligand>
</feature>
<feature type="binding site" evidence="1">
    <location>
        <position position="93"/>
    </location>
    <ligand>
        <name>ATP</name>
        <dbReference type="ChEBI" id="CHEBI:30616"/>
    </ligand>
</feature>
<feature type="binding site" evidence="1">
    <location>
        <begin position="106"/>
        <end position="110"/>
    </location>
    <ligand>
        <name>ATP</name>
        <dbReference type="ChEBI" id="CHEBI:30616"/>
    </ligand>
</feature>
<protein>
    <recommendedName>
        <fullName evidence="1">DNA integrity scanning protein DisA</fullName>
    </recommendedName>
    <alternativeName>
        <fullName evidence="1">Cyclic di-AMP synthase</fullName>
        <shortName evidence="1">c-di-AMP synthase</shortName>
    </alternativeName>
    <alternativeName>
        <fullName evidence="1">Diadenylate cyclase</fullName>
        <ecNumber evidence="1">2.7.7.85</ecNumber>
    </alternativeName>
</protein>
<sequence length="357" mass="40111">MEENKQRVKSMINILQLVAPGTPLREGIDNVLRAQTGGLIVLGYNEQIKSIVDGGFHINCAFSPASLYELAKMDGALILNETGSKILISNAQLVPESSIDSIETGMRHRTAERVAKQTGSLVVAISQRRNVITLYQGNLRYTLKDIGVILTKANQAIQTLEKYKAVWNDGITNLGILEFEEVVTMSEVVHVLHSVEMVLRIKNEILSYIHELGTEGRLIRLQLTELLADLEAEAALLIKDYYQEKTQDHHQILKKLQELANTQLLEDSDLVKLLGYPGQTSLEESVTPRGYRITSKISRVPPLIIENLINRFKTLQGVCRATINELDDVEGIGEVRAKKIREGLKRIQEHLYMSRHN</sequence>
<name>DISA_BACCQ</name>
<organism>
    <name type="scientific">Bacillus cereus (strain Q1)</name>
    <dbReference type="NCBI Taxonomy" id="361100"/>
    <lineage>
        <taxon>Bacteria</taxon>
        <taxon>Bacillati</taxon>
        <taxon>Bacillota</taxon>
        <taxon>Bacilli</taxon>
        <taxon>Bacillales</taxon>
        <taxon>Bacillaceae</taxon>
        <taxon>Bacillus</taxon>
        <taxon>Bacillus cereus group</taxon>
    </lineage>
</organism>
<comment type="function">
    <text evidence="1">Participates in a DNA-damage check-point that is active prior to asymmetric division when DNA is damaged. DisA forms globular foci that rapidly scan along the chromosomes during sporulation, searching for lesions. When a lesion is present, DisA pauses at the lesion site. This triggers a cellular response that culminates in a temporary block in sporulation initiation.</text>
</comment>
<comment type="function">
    <text evidence="1">Also has diadenylate cyclase activity, catalyzing the condensation of 2 ATP molecules into cyclic di-AMP (c-di-AMP). c-di-AMP acts as a signaling molecule that couples DNA integrity with progression of sporulation. The rise in c-di-AMP level generated by DisA while scanning the chromosome, operates as a positive signal that advances sporulation; upon encountering a lesion, the DisA focus arrests at the damaged site and halts c-di-AMP synthesis.</text>
</comment>
<comment type="catalytic activity">
    <reaction evidence="1">
        <text>2 ATP = 3',3'-c-di-AMP + 2 diphosphate</text>
        <dbReference type="Rhea" id="RHEA:35655"/>
        <dbReference type="ChEBI" id="CHEBI:30616"/>
        <dbReference type="ChEBI" id="CHEBI:33019"/>
        <dbReference type="ChEBI" id="CHEBI:71500"/>
        <dbReference type="EC" id="2.7.7.85"/>
    </reaction>
</comment>
<comment type="cofactor">
    <cofactor evidence="1">
        <name>Mg(2+)</name>
        <dbReference type="ChEBI" id="CHEBI:18420"/>
    </cofactor>
</comment>
<comment type="subunit">
    <text evidence="1">Homooctamer.</text>
</comment>
<comment type="similarity">
    <text evidence="1">Belongs to the DisA family.</text>
</comment>
<accession>B9IZG8</accession>
<gene>
    <name evidence="1" type="primary">disA</name>
    <name type="ordered locus">BCQ_0097</name>
</gene>
<proteinExistence type="inferred from homology"/>
<dbReference type="EC" id="2.7.7.85" evidence="1"/>
<dbReference type="EMBL" id="CP000227">
    <property type="protein sequence ID" value="ACM10612.1"/>
    <property type="molecule type" value="Genomic_DNA"/>
</dbReference>
<dbReference type="SMR" id="B9IZG8"/>
<dbReference type="KEGG" id="bcq:BCQ_0097"/>
<dbReference type="HOGENOM" id="CLU_787128_0_0_9"/>
<dbReference type="Proteomes" id="UP000000441">
    <property type="component" value="Chromosome"/>
</dbReference>
<dbReference type="GO" id="GO:0004016">
    <property type="term" value="F:adenylate cyclase activity"/>
    <property type="evidence" value="ECO:0007669"/>
    <property type="project" value="TreeGrafter"/>
</dbReference>
<dbReference type="GO" id="GO:0005524">
    <property type="term" value="F:ATP binding"/>
    <property type="evidence" value="ECO:0007669"/>
    <property type="project" value="UniProtKB-UniRule"/>
</dbReference>
<dbReference type="GO" id="GO:0106408">
    <property type="term" value="F:diadenylate cyclase activity"/>
    <property type="evidence" value="ECO:0007669"/>
    <property type="project" value="UniProtKB-EC"/>
</dbReference>
<dbReference type="GO" id="GO:0003677">
    <property type="term" value="F:DNA binding"/>
    <property type="evidence" value="ECO:0007669"/>
    <property type="project" value="UniProtKB-UniRule"/>
</dbReference>
<dbReference type="GO" id="GO:0006281">
    <property type="term" value="P:DNA repair"/>
    <property type="evidence" value="ECO:0007669"/>
    <property type="project" value="UniProtKB-UniRule"/>
</dbReference>
<dbReference type="FunFam" id="1.10.150.20:FF:000023">
    <property type="entry name" value="DNA integrity scanning protein DisA"/>
    <property type="match status" value="1"/>
</dbReference>
<dbReference type="FunFam" id="1.20.1260.110:FF:000001">
    <property type="entry name" value="DNA integrity scanning protein DisA"/>
    <property type="match status" value="1"/>
</dbReference>
<dbReference type="FunFam" id="3.40.1700.10:FF:000001">
    <property type="entry name" value="DNA integrity scanning protein DisA"/>
    <property type="match status" value="1"/>
</dbReference>
<dbReference type="Gene3D" id="1.10.150.20">
    <property type="entry name" value="5' to 3' exonuclease, C-terminal subdomain"/>
    <property type="match status" value="1"/>
</dbReference>
<dbReference type="Gene3D" id="1.20.1260.110">
    <property type="entry name" value="DNA integrity scanning linker region"/>
    <property type="match status" value="1"/>
</dbReference>
<dbReference type="Gene3D" id="3.40.1700.10">
    <property type="entry name" value="DNA integrity scanning protein, DisA, N-terminal domain"/>
    <property type="match status" value="1"/>
</dbReference>
<dbReference type="HAMAP" id="MF_01438">
    <property type="entry name" value="DisA"/>
    <property type="match status" value="1"/>
</dbReference>
<dbReference type="InterPro" id="IPR050338">
    <property type="entry name" value="DisA"/>
</dbReference>
<dbReference type="InterPro" id="IPR038331">
    <property type="entry name" value="DisA_sf"/>
</dbReference>
<dbReference type="InterPro" id="IPR036888">
    <property type="entry name" value="DNA_integrity_DisA_N_sf"/>
</dbReference>
<dbReference type="InterPro" id="IPR018906">
    <property type="entry name" value="DNA_integrity_scan_DisA_link"/>
</dbReference>
<dbReference type="InterPro" id="IPR003390">
    <property type="entry name" value="DNA_integrity_scan_DisA_N"/>
</dbReference>
<dbReference type="InterPro" id="IPR023763">
    <property type="entry name" value="DNA_integrity_scanning_protein"/>
</dbReference>
<dbReference type="InterPro" id="IPR010994">
    <property type="entry name" value="RuvA_2-like"/>
</dbReference>
<dbReference type="NCBIfam" id="NF010009">
    <property type="entry name" value="PRK13482.1"/>
    <property type="match status" value="1"/>
</dbReference>
<dbReference type="PANTHER" id="PTHR34185">
    <property type="entry name" value="DIADENYLATE CYCLASE"/>
    <property type="match status" value="1"/>
</dbReference>
<dbReference type="PANTHER" id="PTHR34185:SF3">
    <property type="entry name" value="DNA INTEGRITY SCANNING PROTEIN DISA"/>
    <property type="match status" value="1"/>
</dbReference>
<dbReference type="Pfam" id="PF02457">
    <property type="entry name" value="DAC"/>
    <property type="match status" value="1"/>
</dbReference>
<dbReference type="Pfam" id="PF10635">
    <property type="entry name" value="DisA-linker"/>
    <property type="match status" value="1"/>
</dbReference>
<dbReference type="SUPFAM" id="SSF47781">
    <property type="entry name" value="RuvA domain 2-like"/>
    <property type="match status" value="1"/>
</dbReference>
<dbReference type="SUPFAM" id="SSF143597">
    <property type="entry name" value="YojJ-like"/>
    <property type="match status" value="1"/>
</dbReference>
<dbReference type="PROSITE" id="PS51794">
    <property type="entry name" value="DAC"/>
    <property type="match status" value="1"/>
</dbReference>
<keyword id="KW-0067">ATP-binding</keyword>
<keyword id="KW-0227">DNA damage</keyword>
<keyword id="KW-0234">DNA repair</keyword>
<keyword id="KW-0238">DNA-binding</keyword>
<keyword id="KW-0460">Magnesium</keyword>
<keyword id="KW-0547">Nucleotide-binding</keyword>
<keyword id="KW-0548">Nucleotidyltransferase</keyword>
<keyword id="KW-0808">Transferase</keyword>
<evidence type="ECO:0000255" key="1">
    <source>
        <dbReference type="HAMAP-Rule" id="MF_01438"/>
    </source>
</evidence>
<evidence type="ECO:0000255" key="2">
    <source>
        <dbReference type="PROSITE-ProRule" id="PRU01130"/>
    </source>
</evidence>
<reference key="1">
    <citation type="journal article" date="2009" name="J. Bacteriol.">
        <title>Complete genome sequence of the extremophilic Bacillus cereus strain Q1 with industrial applications.</title>
        <authorList>
            <person name="Xiong Z."/>
            <person name="Jiang Y."/>
            <person name="Qi D."/>
            <person name="Lu H."/>
            <person name="Yang F."/>
            <person name="Yang J."/>
            <person name="Chen L."/>
            <person name="Sun L."/>
            <person name="Xu X."/>
            <person name="Xue Y."/>
            <person name="Zhu Y."/>
            <person name="Jin Q."/>
        </authorList>
    </citation>
    <scope>NUCLEOTIDE SEQUENCE [LARGE SCALE GENOMIC DNA]</scope>
    <source>
        <strain>Q1</strain>
    </source>
</reference>